<name>RL36_NOCSJ</name>
<dbReference type="EMBL" id="CP000509">
    <property type="protein sequence ID" value="ABL83377.1"/>
    <property type="molecule type" value="Genomic_DNA"/>
</dbReference>
<dbReference type="RefSeq" id="WP_011757308.1">
    <property type="nucleotide sequence ID" value="NC_008699.1"/>
</dbReference>
<dbReference type="SMR" id="A1SNJ2"/>
<dbReference type="STRING" id="196162.Noca_3879"/>
<dbReference type="KEGG" id="nca:Noca_3879"/>
<dbReference type="eggNOG" id="COG0257">
    <property type="taxonomic scope" value="Bacteria"/>
</dbReference>
<dbReference type="HOGENOM" id="CLU_135723_6_2_11"/>
<dbReference type="OrthoDB" id="9802520at2"/>
<dbReference type="Proteomes" id="UP000000640">
    <property type="component" value="Chromosome"/>
</dbReference>
<dbReference type="GO" id="GO:0005737">
    <property type="term" value="C:cytoplasm"/>
    <property type="evidence" value="ECO:0007669"/>
    <property type="project" value="UniProtKB-ARBA"/>
</dbReference>
<dbReference type="GO" id="GO:1990904">
    <property type="term" value="C:ribonucleoprotein complex"/>
    <property type="evidence" value="ECO:0007669"/>
    <property type="project" value="UniProtKB-KW"/>
</dbReference>
<dbReference type="GO" id="GO:0005840">
    <property type="term" value="C:ribosome"/>
    <property type="evidence" value="ECO:0007669"/>
    <property type="project" value="UniProtKB-KW"/>
</dbReference>
<dbReference type="GO" id="GO:0003735">
    <property type="term" value="F:structural constituent of ribosome"/>
    <property type="evidence" value="ECO:0007669"/>
    <property type="project" value="InterPro"/>
</dbReference>
<dbReference type="GO" id="GO:0006412">
    <property type="term" value="P:translation"/>
    <property type="evidence" value="ECO:0007669"/>
    <property type="project" value="UniProtKB-UniRule"/>
</dbReference>
<dbReference type="HAMAP" id="MF_00251">
    <property type="entry name" value="Ribosomal_bL36"/>
    <property type="match status" value="1"/>
</dbReference>
<dbReference type="InterPro" id="IPR000473">
    <property type="entry name" value="Ribosomal_bL36"/>
</dbReference>
<dbReference type="InterPro" id="IPR035977">
    <property type="entry name" value="Ribosomal_bL36_sp"/>
</dbReference>
<dbReference type="NCBIfam" id="TIGR01022">
    <property type="entry name" value="rpmJ_bact"/>
    <property type="match status" value="1"/>
</dbReference>
<dbReference type="PANTHER" id="PTHR42888">
    <property type="entry name" value="50S RIBOSOMAL PROTEIN L36, CHLOROPLASTIC"/>
    <property type="match status" value="1"/>
</dbReference>
<dbReference type="PANTHER" id="PTHR42888:SF1">
    <property type="entry name" value="LARGE RIBOSOMAL SUBUNIT PROTEIN BL36C"/>
    <property type="match status" value="1"/>
</dbReference>
<dbReference type="Pfam" id="PF00444">
    <property type="entry name" value="Ribosomal_L36"/>
    <property type="match status" value="1"/>
</dbReference>
<dbReference type="SUPFAM" id="SSF57840">
    <property type="entry name" value="Ribosomal protein L36"/>
    <property type="match status" value="1"/>
</dbReference>
<dbReference type="PROSITE" id="PS00828">
    <property type="entry name" value="RIBOSOMAL_L36"/>
    <property type="match status" value="1"/>
</dbReference>
<sequence>MKVKPSVKPICDKCKVIRRHGRVMVICENPRHKQRQG</sequence>
<organism>
    <name type="scientific">Nocardioides sp. (strain ATCC BAA-499 / JS614)</name>
    <dbReference type="NCBI Taxonomy" id="196162"/>
    <lineage>
        <taxon>Bacteria</taxon>
        <taxon>Bacillati</taxon>
        <taxon>Actinomycetota</taxon>
        <taxon>Actinomycetes</taxon>
        <taxon>Propionibacteriales</taxon>
        <taxon>Nocardioidaceae</taxon>
        <taxon>Nocardioides</taxon>
    </lineage>
</organism>
<protein>
    <recommendedName>
        <fullName evidence="1">Large ribosomal subunit protein bL36</fullName>
    </recommendedName>
    <alternativeName>
        <fullName evidence="2">50S ribosomal protein L36</fullName>
    </alternativeName>
</protein>
<feature type="chain" id="PRO_0000302256" description="Large ribosomal subunit protein bL36">
    <location>
        <begin position="1"/>
        <end position="37"/>
    </location>
</feature>
<keyword id="KW-1185">Reference proteome</keyword>
<keyword id="KW-0687">Ribonucleoprotein</keyword>
<keyword id="KW-0689">Ribosomal protein</keyword>
<comment type="similarity">
    <text evidence="1">Belongs to the bacterial ribosomal protein bL36 family.</text>
</comment>
<evidence type="ECO:0000255" key="1">
    <source>
        <dbReference type="HAMAP-Rule" id="MF_00251"/>
    </source>
</evidence>
<evidence type="ECO:0000305" key="2"/>
<accession>A1SNJ2</accession>
<gene>
    <name evidence="1" type="primary">rpmJ</name>
    <name type="ordered locus">Noca_3879</name>
</gene>
<proteinExistence type="inferred from homology"/>
<reference key="1">
    <citation type="submission" date="2006-12" db="EMBL/GenBank/DDBJ databases">
        <title>Complete sequence of chromosome 1 of Nocardioides sp. JS614.</title>
        <authorList>
            <person name="Copeland A."/>
            <person name="Lucas S."/>
            <person name="Lapidus A."/>
            <person name="Barry K."/>
            <person name="Detter J.C."/>
            <person name="Glavina del Rio T."/>
            <person name="Hammon N."/>
            <person name="Israni S."/>
            <person name="Dalin E."/>
            <person name="Tice H."/>
            <person name="Pitluck S."/>
            <person name="Thompson L.S."/>
            <person name="Brettin T."/>
            <person name="Bruce D."/>
            <person name="Han C."/>
            <person name="Tapia R."/>
            <person name="Schmutz J."/>
            <person name="Larimer F."/>
            <person name="Land M."/>
            <person name="Hauser L."/>
            <person name="Kyrpides N."/>
            <person name="Kim E."/>
            <person name="Mattes T."/>
            <person name="Gossett J."/>
            <person name="Richardson P."/>
        </authorList>
    </citation>
    <scope>NUCLEOTIDE SEQUENCE [LARGE SCALE GENOMIC DNA]</scope>
    <source>
        <strain>ATCC BAA-499 / JS614</strain>
    </source>
</reference>